<sequence>MTENTPGTSAPERFDPATADTRWQRVWDEKQSFRADDSSTKPRSYVLEMFPYPSGRIHIGHVRNYTMGDVLARYKRMRGFEVLHPMGWDAFGMPAENAAMEKGVHPGGWTRDNIANMKAQLKRLGFALDWSREIATCEPEYYGQEQALFLDLYAAGLVYRKESTVNWDPVDMTVLANEQVIDGRGWRSGALVEKRKLNQWFLKITDFADELLEGLSTLDKWPEKVRVMQENWIGKSQGLQFRFDLSNGETVEVYTTRPDTIFGASFVAVAPDHPIAQGVAAINCEAANFIALCKKGGTTAAELETAEKLGFDTGIGARHPLTGKYLPVYIANFVLMEYGTGAIMAVPGHDQRDFDFATKYALPILRVVAADAADADKPFAGEAEAGDGVLVNSGFLDGMNVADAKAAVIVRAESEGWGEGKTVWRLRDWGVSRQRYWGTPIPFIHCEVCGVVPVPKKHLPVTLPEDVSFDVPGNPLDRHPTWKHVDCPQCGHPARRETDTLDTFVDSSWYFLRFASQPEDRPFDPEEIKRWLPVEQYIGGIEHAILHLLYARFWTRALARIGKVEVTEPFGSLFTQGMVTHETYERRNPENGQPIFFSPGEVERTGEGATLKVDGAPVEIGRVIKMSKSKKNVVDPDEIVAKYGADAIRWFMLSDSPPERDLPWSEAGIEGCARFVQRLWRLFGQYDAAATGEDKALDRKAHQTVHAVASDIEALGFNKAVARIYELTGAVEKAAPSASRSDAIRKLLLLVAPMMPHLAEEAYARFGSSLIADAAWPEVDPALLVDDEVIVAVQVKGKLRDTLTVAKGTPKEDLERLALASEKVQRALEGAEVKKVIVVPDRLVNLVA</sequence>
<reference key="1">
    <citation type="submission" date="2006-01" db="EMBL/GenBank/DDBJ databases">
        <title>Complete sequence of Novosphingobium aromaticivorans DSM 12444.</title>
        <authorList>
            <consortium name="US DOE Joint Genome Institute"/>
            <person name="Copeland A."/>
            <person name="Lucas S."/>
            <person name="Lapidus A."/>
            <person name="Barry K."/>
            <person name="Detter J.C."/>
            <person name="Glavina T."/>
            <person name="Hammon N."/>
            <person name="Israni S."/>
            <person name="Pitluck S."/>
            <person name="Chain P."/>
            <person name="Malfatti S."/>
            <person name="Shin M."/>
            <person name="Vergez L."/>
            <person name="Schmutz J."/>
            <person name="Larimer F."/>
            <person name="Land M."/>
            <person name="Kyrpides N."/>
            <person name="Ivanova N."/>
            <person name="Fredrickson J."/>
            <person name="Balkwill D."/>
            <person name="Romine M.F."/>
            <person name="Richardson P."/>
        </authorList>
    </citation>
    <scope>NUCLEOTIDE SEQUENCE [LARGE SCALE GENOMIC DNA]</scope>
    <source>
        <strain>ATCC 700278 / DSM 12444 / CCUG 56034 / CIP 105152 / NBRC 16084 / F199</strain>
    </source>
</reference>
<organism>
    <name type="scientific">Novosphingobium aromaticivorans (strain ATCC 700278 / DSM 12444 / CCUG 56034 / CIP 105152 / NBRC 16084 / F199)</name>
    <dbReference type="NCBI Taxonomy" id="279238"/>
    <lineage>
        <taxon>Bacteria</taxon>
        <taxon>Pseudomonadati</taxon>
        <taxon>Pseudomonadota</taxon>
        <taxon>Alphaproteobacteria</taxon>
        <taxon>Sphingomonadales</taxon>
        <taxon>Sphingomonadaceae</taxon>
        <taxon>Novosphingobium</taxon>
    </lineage>
</organism>
<comment type="catalytic activity">
    <reaction evidence="1">
        <text>tRNA(Leu) + L-leucine + ATP = L-leucyl-tRNA(Leu) + AMP + diphosphate</text>
        <dbReference type="Rhea" id="RHEA:11688"/>
        <dbReference type="Rhea" id="RHEA-COMP:9613"/>
        <dbReference type="Rhea" id="RHEA-COMP:9622"/>
        <dbReference type="ChEBI" id="CHEBI:30616"/>
        <dbReference type="ChEBI" id="CHEBI:33019"/>
        <dbReference type="ChEBI" id="CHEBI:57427"/>
        <dbReference type="ChEBI" id="CHEBI:78442"/>
        <dbReference type="ChEBI" id="CHEBI:78494"/>
        <dbReference type="ChEBI" id="CHEBI:456215"/>
        <dbReference type="EC" id="6.1.1.4"/>
    </reaction>
</comment>
<comment type="subcellular location">
    <subcellularLocation>
        <location evidence="1">Cytoplasm</location>
    </subcellularLocation>
</comment>
<comment type="similarity">
    <text evidence="1">Belongs to the class-I aminoacyl-tRNA synthetase family.</text>
</comment>
<dbReference type="EC" id="6.1.1.4" evidence="1"/>
<dbReference type="EMBL" id="CP000248">
    <property type="protein sequence ID" value="ABD27650.1"/>
    <property type="molecule type" value="Genomic_DNA"/>
</dbReference>
<dbReference type="RefSeq" id="WP_011446852.1">
    <property type="nucleotide sequence ID" value="NC_007794.1"/>
</dbReference>
<dbReference type="SMR" id="Q2G3C3"/>
<dbReference type="STRING" id="279238.Saro_3215"/>
<dbReference type="KEGG" id="nar:Saro_3215"/>
<dbReference type="eggNOG" id="COG0495">
    <property type="taxonomic scope" value="Bacteria"/>
</dbReference>
<dbReference type="HOGENOM" id="CLU_004427_0_0_5"/>
<dbReference type="Proteomes" id="UP000009134">
    <property type="component" value="Chromosome"/>
</dbReference>
<dbReference type="GO" id="GO:0005829">
    <property type="term" value="C:cytosol"/>
    <property type="evidence" value="ECO:0007669"/>
    <property type="project" value="TreeGrafter"/>
</dbReference>
<dbReference type="GO" id="GO:0002161">
    <property type="term" value="F:aminoacyl-tRNA deacylase activity"/>
    <property type="evidence" value="ECO:0007669"/>
    <property type="project" value="InterPro"/>
</dbReference>
<dbReference type="GO" id="GO:0005524">
    <property type="term" value="F:ATP binding"/>
    <property type="evidence" value="ECO:0007669"/>
    <property type="project" value="UniProtKB-UniRule"/>
</dbReference>
<dbReference type="GO" id="GO:0004823">
    <property type="term" value="F:leucine-tRNA ligase activity"/>
    <property type="evidence" value="ECO:0007669"/>
    <property type="project" value="UniProtKB-UniRule"/>
</dbReference>
<dbReference type="GO" id="GO:0006429">
    <property type="term" value="P:leucyl-tRNA aminoacylation"/>
    <property type="evidence" value="ECO:0007669"/>
    <property type="project" value="UniProtKB-UniRule"/>
</dbReference>
<dbReference type="CDD" id="cd07958">
    <property type="entry name" value="Anticodon_Ia_Leu_BEm"/>
    <property type="match status" value="1"/>
</dbReference>
<dbReference type="CDD" id="cd00812">
    <property type="entry name" value="LeuRS_core"/>
    <property type="match status" value="1"/>
</dbReference>
<dbReference type="FunFam" id="1.10.730.10:FF:000002">
    <property type="entry name" value="Leucine--tRNA ligase"/>
    <property type="match status" value="1"/>
</dbReference>
<dbReference type="FunFam" id="3.10.20.590:FF:000001">
    <property type="entry name" value="Leucine--tRNA ligase"/>
    <property type="match status" value="1"/>
</dbReference>
<dbReference type="FunFam" id="3.40.50.620:FF:000003">
    <property type="entry name" value="Leucine--tRNA ligase"/>
    <property type="match status" value="1"/>
</dbReference>
<dbReference type="Gene3D" id="2.20.28.290">
    <property type="match status" value="1"/>
</dbReference>
<dbReference type="Gene3D" id="3.10.20.590">
    <property type="match status" value="1"/>
</dbReference>
<dbReference type="Gene3D" id="3.40.50.620">
    <property type="entry name" value="HUPs"/>
    <property type="match status" value="2"/>
</dbReference>
<dbReference type="Gene3D" id="1.10.730.10">
    <property type="entry name" value="Isoleucyl-tRNA Synthetase, Domain 1"/>
    <property type="match status" value="2"/>
</dbReference>
<dbReference type="HAMAP" id="MF_00049_B">
    <property type="entry name" value="Leu_tRNA_synth_B"/>
    <property type="match status" value="1"/>
</dbReference>
<dbReference type="InterPro" id="IPR001412">
    <property type="entry name" value="aa-tRNA-synth_I_CS"/>
</dbReference>
<dbReference type="InterPro" id="IPR002300">
    <property type="entry name" value="aa-tRNA-synth_Ia"/>
</dbReference>
<dbReference type="InterPro" id="IPR002302">
    <property type="entry name" value="Leu-tRNA-ligase"/>
</dbReference>
<dbReference type="InterPro" id="IPR025709">
    <property type="entry name" value="Leu_tRNA-synth_edit"/>
</dbReference>
<dbReference type="InterPro" id="IPR013155">
    <property type="entry name" value="M/V/L/I-tRNA-synth_anticd-bd"/>
</dbReference>
<dbReference type="InterPro" id="IPR015413">
    <property type="entry name" value="Methionyl/Leucyl_tRNA_Synth"/>
</dbReference>
<dbReference type="InterPro" id="IPR014729">
    <property type="entry name" value="Rossmann-like_a/b/a_fold"/>
</dbReference>
<dbReference type="InterPro" id="IPR009080">
    <property type="entry name" value="tRNAsynth_Ia_anticodon-bd"/>
</dbReference>
<dbReference type="InterPro" id="IPR009008">
    <property type="entry name" value="Val/Leu/Ile-tRNA-synth_edit"/>
</dbReference>
<dbReference type="NCBIfam" id="TIGR00396">
    <property type="entry name" value="leuS_bact"/>
    <property type="match status" value="1"/>
</dbReference>
<dbReference type="PANTHER" id="PTHR43740:SF2">
    <property type="entry name" value="LEUCINE--TRNA LIGASE, MITOCHONDRIAL"/>
    <property type="match status" value="1"/>
</dbReference>
<dbReference type="PANTHER" id="PTHR43740">
    <property type="entry name" value="LEUCYL-TRNA SYNTHETASE"/>
    <property type="match status" value="1"/>
</dbReference>
<dbReference type="Pfam" id="PF08264">
    <property type="entry name" value="Anticodon_1"/>
    <property type="match status" value="1"/>
</dbReference>
<dbReference type="Pfam" id="PF00133">
    <property type="entry name" value="tRNA-synt_1"/>
    <property type="match status" value="2"/>
</dbReference>
<dbReference type="Pfam" id="PF13603">
    <property type="entry name" value="tRNA-synt_1_2"/>
    <property type="match status" value="1"/>
</dbReference>
<dbReference type="Pfam" id="PF09334">
    <property type="entry name" value="tRNA-synt_1g"/>
    <property type="match status" value="1"/>
</dbReference>
<dbReference type="PRINTS" id="PR00985">
    <property type="entry name" value="TRNASYNTHLEU"/>
</dbReference>
<dbReference type="SUPFAM" id="SSF47323">
    <property type="entry name" value="Anticodon-binding domain of a subclass of class I aminoacyl-tRNA synthetases"/>
    <property type="match status" value="1"/>
</dbReference>
<dbReference type="SUPFAM" id="SSF52374">
    <property type="entry name" value="Nucleotidylyl transferase"/>
    <property type="match status" value="1"/>
</dbReference>
<dbReference type="SUPFAM" id="SSF50677">
    <property type="entry name" value="ValRS/IleRS/LeuRS editing domain"/>
    <property type="match status" value="1"/>
</dbReference>
<dbReference type="PROSITE" id="PS00178">
    <property type="entry name" value="AA_TRNA_LIGASE_I"/>
    <property type="match status" value="1"/>
</dbReference>
<feature type="chain" id="PRO_0000334784" description="Leucine--tRNA ligase">
    <location>
        <begin position="1"/>
        <end position="848"/>
    </location>
</feature>
<feature type="region of interest" description="Disordered" evidence="2">
    <location>
        <begin position="1"/>
        <end position="21"/>
    </location>
</feature>
<feature type="short sequence motif" description="'HIGH' region">
    <location>
        <begin position="51"/>
        <end position="61"/>
    </location>
</feature>
<feature type="short sequence motif" description="'KMSKS' region">
    <location>
        <begin position="625"/>
        <end position="629"/>
    </location>
</feature>
<feature type="binding site" evidence="1">
    <location>
        <position position="628"/>
    </location>
    <ligand>
        <name>ATP</name>
        <dbReference type="ChEBI" id="CHEBI:30616"/>
    </ligand>
</feature>
<proteinExistence type="inferred from homology"/>
<gene>
    <name evidence="1" type="primary">leuS</name>
    <name type="ordered locus">Saro_3215</name>
</gene>
<keyword id="KW-0030">Aminoacyl-tRNA synthetase</keyword>
<keyword id="KW-0067">ATP-binding</keyword>
<keyword id="KW-0963">Cytoplasm</keyword>
<keyword id="KW-0436">Ligase</keyword>
<keyword id="KW-0547">Nucleotide-binding</keyword>
<keyword id="KW-0648">Protein biosynthesis</keyword>
<keyword id="KW-1185">Reference proteome</keyword>
<accession>Q2G3C3</accession>
<protein>
    <recommendedName>
        <fullName evidence="1">Leucine--tRNA ligase</fullName>
        <ecNumber evidence="1">6.1.1.4</ecNumber>
    </recommendedName>
    <alternativeName>
        <fullName evidence="1">Leucyl-tRNA synthetase</fullName>
        <shortName evidence="1">LeuRS</shortName>
    </alternativeName>
</protein>
<name>SYL_NOVAD</name>
<evidence type="ECO:0000255" key="1">
    <source>
        <dbReference type="HAMAP-Rule" id="MF_00049"/>
    </source>
</evidence>
<evidence type="ECO:0000256" key="2">
    <source>
        <dbReference type="SAM" id="MobiDB-lite"/>
    </source>
</evidence>